<evidence type="ECO:0000255" key="1">
    <source>
        <dbReference type="HAMAP-Rule" id="MF_00197"/>
    </source>
</evidence>
<protein>
    <recommendedName>
        <fullName evidence="1">Diaminopimelate epimerase</fullName>
        <shortName evidence="1">DAP epimerase</shortName>
        <ecNumber evidence="1">5.1.1.7</ecNumber>
    </recommendedName>
    <alternativeName>
        <fullName evidence="1">PLP-independent amino acid racemase</fullName>
    </alternativeName>
</protein>
<accession>C5CND4</accession>
<name>DAPF_VARPS</name>
<gene>
    <name evidence="1" type="primary">dapF</name>
    <name type="ordered locus">Vapar_0899</name>
</gene>
<keyword id="KW-0028">Amino-acid biosynthesis</keyword>
<keyword id="KW-0963">Cytoplasm</keyword>
<keyword id="KW-0413">Isomerase</keyword>
<keyword id="KW-0457">Lysine biosynthesis</keyword>
<proteinExistence type="inferred from homology"/>
<feature type="chain" id="PRO_1000204070" description="Diaminopimelate epimerase">
    <location>
        <begin position="1"/>
        <end position="294"/>
    </location>
</feature>
<feature type="active site" description="Proton donor" evidence="1">
    <location>
        <position position="78"/>
    </location>
</feature>
<feature type="active site" description="Proton acceptor" evidence="1">
    <location>
        <position position="233"/>
    </location>
</feature>
<feature type="binding site" evidence="1">
    <location>
        <position position="13"/>
    </location>
    <ligand>
        <name>substrate</name>
    </ligand>
</feature>
<feature type="binding site" evidence="1">
    <location>
        <position position="46"/>
    </location>
    <ligand>
        <name>substrate</name>
    </ligand>
</feature>
<feature type="binding site" evidence="1">
    <location>
        <position position="69"/>
    </location>
    <ligand>
        <name>substrate</name>
    </ligand>
</feature>
<feature type="binding site" evidence="1">
    <location>
        <begin position="79"/>
        <end position="80"/>
    </location>
    <ligand>
        <name>substrate</name>
    </ligand>
</feature>
<feature type="binding site" evidence="1">
    <location>
        <position position="173"/>
    </location>
    <ligand>
        <name>substrate</name>
    </ligand>
</feature>
<feature type="binding site" evidence="1">
    <location>
        <position position="206"/>
    </location>
    <ligand>
        <name>substrate</name>
    </ligand>
</feature>
<feature type="binding site" evidence="1">
    <location>
        <begin position="224"/>
        <end position="225"/>
    </location>
    <ligand>
        <name>substrate</name>
    </ligand>
</feature>
<feature type="binding site" evidence="1">
    <location>
        <begin position="234"/>
        <end position="235"/>
    </location>
    <ligand>
        <name>substrate</name>
    </ligand>
</feature>
<feature type="site" description="Could be important to modulate the pK values of the two catalytic cysteine residues" evidence="1">
    <location>
        <position position="175"/>
    </location>
</feature>
<feature type="site" description="Could be important to modulate the pK values of the two catalytic cysteine residues" evidence="1">
    <location>
        <position position="224"/>
    </location>
</feature>
<sequence>MRIRFTKMQGAGNDFVVLDETRGTLGLTAAQYRFLADRHFGVGADQILTVRPPSKGAAEGVDFQYVIHNADGGEVEQCGNGARCFMRFVREHHLTDKDTVRVETLAGIIEPRMGADGRVTVDMGPPIFEPARVPFDTAGLDPQPTGSWHTWHLALGTHADSAIVSVAVLSMGNPHAVQVVDNVDTAPVARQGPLIEHHPRFAQRVNAGFMQVVDRSHIKLRVFERGAGETLACGTGACAAVVAGIRLGLLERRVDVQTHGGVLTIGWEGEGHPVLMTGPATTVFEGDIEVPELP</sequence>
<comment type="function">
    <text evidence="1">Catalyzes the stereoinversion of LL-2,6-diaminopimelate (L,L-DAP) to meso-diaminopimelate (meso-DAP), a precursor of L-lysine and an essential component of the bacterial peptidoglycan.</text>
</comment>
<comment type="catalytic activity">
    <reaction evidence="1">
        <text>(2S,6S)-2,6-diaminopimelate = meso-2,6-diaminopimelate</text>
        <dbReference type="Rhea" id="RHEA:15393"/>
        <dbReference type="ChEBI" id="CHEBI:57609"/>
        <dbReference type="ChEBI" id="CHEBI:57791"/>
        <dbReference type="EC" id="5.1.1.7"/>
    </reaction>
</comment>
<comment type="pathway">
    <text evidence="1">Amino-acid biosynthesis; L-lysine biosynthesis via DAP pathway; DL-2,6-diaminopimelate from LL-2,6-diaminopimelate: step 1/1.</text>
</comment>
<comment type="subunit">
    <text evidence="1">Homodimer.</text>
</comment>
<comment type="subcellular location">
    <subcellularLocation>
        <location evidence="1">Cytoplasm</location>
    </subcellularLocation>
</comment>
<comment type="similarity">
    <text evidence="1">Belongs to the diaminopimelate epimerase family.</text>
</comment>
<reference key="1">
    <citation type="journal article" date="2011" name="J. Bacteriol.">
        <title>Complete genome sequence of the metabolically versatile plant growth-promoting endophyte, Variovorax paradoxus S110.</title>
        <authorList>
            <person name="Han J.I."/>
            <person name="Choi H.K."/>
            <person name="Lee S.W."/>
            <person name="Orwin P.M."/>
            <person name="Kim J."/>
            <person name="Laroe S.L."/>
            <person name="Kim T.G."/>
            <person name="O'Neil J."/>
            <person name="Leadbetter J.R."/>
            <person name="Lee S.Y."/>
            <person name="Hur C.G."/>
            <person name="Spain J.C."/>
            <person name="Ovchinnikova G."/>
            <person name="Goodwin L."/>
            <person name="Han C."/>
        </authorList>
    </citation>
    <scope>NUCLEOTIDE SEQUENCE [LARGE SCALE GENOMIC DNA]</scope>
    <source>
        <strain>S110</strain>
    </source>
</reference>
<organism>
    <name type="scientific">Variovorax paradoxus (strain S110)</name>
    <dbReference type="NCBI Taxonomy" id="543728"/>
    <lineage>
        <taxon>Bacteria</taxon>
        <taxon>Pseudomonadati</taxon>
        <taxon>Pseudomonadota</taxon>
        <taxon>Betaproteobacteria</taxon>
        <taxon>Burkholderiales</taxon>
        <taxon>Comamonadaceae</taxon>
        <taxon>Variovorax</taxon>
    </lineage>
</organism>
<dbReference type="EC" id="5.1.1.7" evidence="1"/>
<dbReference type="EMBL" id="CP001635">
    <property type="protein sequence ID" value="ACS17550.1"/>
    <property type="molecule type" value="Genomic_DNA"/>
</dbReference>
<dbReference type="SMR" id="C5CND4"/>
<dbReference type="STRING" id="543728.Vapar_0899"/>
<dbReference type="KEGG" id="vap:Vapar_0899"/>
<dbReference type="eggNOG" id="COG0253">
    <property type="taxonomic scope" value="Bacteria"/>
</dbReference>
<dbReference type="HOGENOM" id="CLU_053306_1_1_4"/>
<dbReference type="OrthoDB" id="9805408at2"/>
<dbReference type="UniPathway" id="UPA00034">
    <property type="reaction ID" value="UER00025"/>
</dbReference>
<dbReference type="GO" id="GO:0005829">
    <property type="term" value="C:cytosol"/>
    <property type="evidence" value="ECO:0007669"/>
    <property type="project" value="TreeGrafter"/>
</dbReference>
<dbReference type="GO" id="GO:0008837">
    <property type="term" value="F:diaminopimelate epimerase activity"/>
    <property type="evidence" value="ECO:0007669"/>
    <property type="project" value="UniProtKB-UniRule"/>
</dbReference>
<dbReference type="GO" id="GO:0009089">
    <property type="term" value="P:lysine biosynthetic process via diaminopimelate"/>
    <property type="evidence" value="ECO:0007669"/>
    <property type="project" value="UniProtKB-UniRule"/>
</dbReference>
<dbReference type="FunFam" id="3.10.310.10:FF:000001">
    <property type="entry name" value="Diaminopimelate epimerase"/>
    <property type="match status" value="1"/>
</dbReference>
<dbReference type="Gene3D" id="3.10.310.10">
    <property type="entry name" value="Diaminopimelate Epimerase, Chain A, domain 1"/>
    <property type="match status" value="2"/>
</dbReference>
<dbReference type="HAMAP" id="MF_00197">
    <property type="entry name" value="DAP_epimerase"/>
    <property type="match status" value="1"/>
</dbReference>
<dbReference type="InterPro" id="IPR018510">
    <property type="entry name" value="DAP_epimerase_AS"/>
</dbReference>
<dbReference type="InterPro" id="IPR001653">
    <property type="entry name" value="DAP_epimerase_DapF"/>
</dbReference>
<dbReference type="NCBIfam" id="TIGR00652">
    <property type="entry name" value="DapF"/>
    <property type="match status" value="1"/>
</dbReference>
<dbReference type="PANTHER" id="PTHR31689:SF0">
    <property type="entry name" value="DIAMINOPIMELATE EPIMERASE"/>
    <property type="match status" value="1"/>
</dbReference>
<dbReference type="PANTHER" id="PTHR31689">
    <property type="entry name" value="DIAMINOPIMELATE EPIMERASE, CHLOROPLASTIC"/>
    <property type="match status" value="1"/>
</dbReference>
<dbReference type="Pfam" id="PF01678">
    <property type="entry name" value="DAP_epimerase"/>
    <property type="match status" value="2"/>
</dbReference>
<dbReference type="SUPFAM" id="SSF54506">
    <property type="entry name" value="Diaminopimelate epimerase-like"/>
    <property type="match status" value="2"/>
</dbReference>
<dbReference type="PROSITE" id="PS01326">
    <property type="entry name" value="DAP_EPIMERASE"/>
    <property type="match status" value="1"/>
</dbReference>